<name>CEP57_HUMAN</name>
<comment type="function">
    <text evidence="8">Centrosomal protein which may be required for microtubule attachment to centrosomes. May act by forming ring-like structures around microtubules. Mediates nuclear translocation and mitogenic activity of the internalized growth factor FGF2, but that of FGF1.</text>
</comment>
<comment type="subunit">
    <text evidence="4">Homodimer and homooligomer. Interacts with microtubules. Interacts with FGF2 and RAP80. Does not interact with FGF1 or FGF2 isoform 24 kDa.</text>
</comment>
<comment type="interaction">
    <interactant intactId="EBI-308614">
        <id>Q86XR8</id>
    </interactant>
    <interactant intactId="EBI-741977">
        <id>Q96MT8</id>
        <label>CEP63</label>
    </interactant>
    <organismsDiffer>false</organismsDiffer>
    <experiments>5</experiments>
</comment>
<comment type="interaction">
    <interactant intactId="EBI-308614">
        <id>Q86XR8</id>
    </interactant>
    <interactant intactId="EBI-348399">
        <id>P22607</id>
        <label>FGFR3</label>
    </interactant>
    <organismsDiffer>false</organismsDiffer>
    <experiments>3</experiments>
</comment>
<comment type="interaction">
    <interactant intactId="EBI-308614">
        <id>Q86XR8</id>
    </interactant>
    <interactant intactId="EBI-746252">
        <id>Q96CN9</id>
        <label>GCC1</label>
    </interactant>
    <organismsDiffer>false</organismsDiffer>
    <experiments>5</experiments>
</comment>
<comment type="interaction">
    <interactant intactId="EBI-308614">
        <id>Q86XR8</id>
    </interactant>
    <interactant intactId="EBI-350145">
        <id>P01112</id>
        <label>HRAS</label>
    </interactant>
    <organismsDiffer>false</organismsDiffer>
    <experiments>3</experiments>
</comment>
<comment type="interaction">
    <interactant intactId="EBI-308614">
        <id>Q86XR8</id>
    </interactant>
    <interactant intactId="EBI-10171552">
        <id>A1A4E9</id>
        <label>KRT13</label>
    </interactant>
    <organismsDiffer>false</organismsDiffer>
    <experiments>3</experiments>
</comment>
<comment type="interaction">
    <interactant intactId="EBI-308614">
        <id>Q86XR8</id>
    </interactant>
    <interactant intactId="EBI-739566">
        <id>P19012</id>
        <label>KRT15</label>
    </interactant>
    <organismsDiffer>false</organismsDiffer>
    <experiments>3</experiments>
</comment>
<comment type="interaction">
    <interactant intactId="EBI-308614">
        <id>Q86XR8</id>
    </interactant>
    <interactant intactId="EBI-948001">
        <id>Q15323</id>
        <label>KRT31</label>
    </interactant>
    <organismsDiffer>false</organismsDiffer>
    <experiments>3</experiments>
</comment>
<comment type="interaction">
    <interactant intactId="EBI-308614">
        <id>Q86XR8</id>
    </interactant>
    <interactant intactId="EBI-10171697">
        <id>Q6A162</id>
        <label>KRT40</label>
    </interactant>
    <organismsDiffer>false</organismsDiffer>
    <experiments>3</experiments>
</comment>
<comment type="interaction">
    <interactant intactId="EBI-308614">
        <id>Q86XR8</id>
    </interactant>
    <interactant intactId="EBI-10239285">
        <id>Q96E03</id>
        <label>MAGEA2B</label>
    </interactant>
    <organismsDiffer>false</organismsDiffer>
    <experiments>3</experiments>
</comment>
<comment type="interaction">
    <interactant intactId="EBI-308614">
        <id>Q86XR8</id>
    </interactant>
    <interactant intactId="EBI-1050253">
        <id>Q96PC5</id>
        <label>MIA2</label>
    </interactant>
    <organismsDiffer>false</organismsDiffer>
    <experiments>3</experiments>
</comment>
<comment type="interaction">
    <interactant intactId="EBI-308614">
        <id>Q86XR8</id>
    </interactant>
    <interactant intactId="EBI-447544">
        <id>P01106</id>
        <label>MYC</label>
    </interactant>
    <organismsDiffer>false</organismsDiffer>
    <experiments>3</experiments>
</comment>
<comment type="interaction">
    <interactant intactId="EBI-308614">
        <id>Q86XR8</id>
    </interactant>
    <interactant intactId="EBI-749285">
        <id>Q15311</id>
        <label>RALBP1</label>
    </interactant>
    <organismsDiffer>false</organismsDiffer>
    <experiments>4</experiments>
</comment>
<comment type="interaction">
    <interactant intactId="EBI-308614">
        <id>Q86XR8</id>
    </interactant>
    <interactant intactId="EBI-5235340">
        <id>Q7Z699</id>
        <label>SPRED1</label>
    </interactant>
    <organismsDiffer>false</organismsDiffer>
    <experiments>3</experiments>
</comment>
<comment type="interaction">
    <interactant intactId="EBI-308614">
        <id>Q86XR8</id>
    </interactant>
    <interactant intactId="EBI-1105213">
        <id>Q9UBB9</id>
        <label>TFIP11</label>
    </interactant>
    <organismsDiffer>false</organismsDiffer>
    <experiments>4</experiments>
</comment>
<comment type="interaction">
    <interactant intactId="EBI-308614">
        <id>Q86XR8</id>
    </interactant>
    <interactant intactId="EBI-25900580">
        <id>Q9Y649</id>
    </interactant>
    <organismsDiffer>false</organismsDiffer>
    <experiments>3</experiments>
</comment>
<comment type="interaction">
    <interactant intactId="EBI-11752486">
        <id>Q86XR8-3</id>
    </interactant>
    <interactant intactId="EBI-5463075">
        <id>Q4LEZ3</id>
        <label>AARD</label>
    </interactant>
    <organismsDiffer>false</organismsDiffer>
    <experiments>3</experiments>
</comment>
<comment type="interaction">
    <interactant intactId="EBI-11752486">
        <id>Q86XR8-3</id>
    </interactant>
    <interactant intactId="EBI-11096309">
        <id>Q9NYB9-2</id>
        <label>ABI2</label>
    </interactant>
    <organismsDiffer>false</organismsDiffer>
    <experiments>3</experiments>
</comment>
<comment type="interaction">
    <interactant intactId="EBI-11752486">
        <id>Q86XR8-3</id>
    </interactant>
    <interactant intactId="EBI-1166928">
        <id>Q8N5M1</id>
        <label>ATPAF2</label>
    </interactant>
    <organismsDiffer>false</organismsDiffer>
    <experiments>3</experiments>
</comment>
<comment type="interaction">
    <interactant intactId="EBI-11752486">
        <id>Q86XR8-3</id>
    </interactant>
    <interactant intactId="EBI-10972887">
        <id>Q96M89-2</id>
        <label>CCDC138</label>
    </interactant>
    <organismsDiffer>false</organismsDiffer>
    <experiments>3</experiments>
</comment>
<comment type="interaction">
    <interactant intactId="EBI-11752486">
        <id>Q86XR8-3</id>
    </interactant>
    <interactant intactId="EBI-740814">
        <id>Q8N715</id>
        <label>CCDC185</label>
    </interactant>
    <organismsDiffer>false</organismsDiffer>
    <experiments>3</experiments>
</comment>
<comment type="interaction">
    <interactant intactId="EBI-11752486">
        <id>Q86XR8-3</id>
    </interactant>
    <interactant intactId="EBI-10175300">
        <id>Q8TD31-3</id>
        <label>CCHCR1</label>
    </interactant>
    <organismsDiffer>false</organismsDiffer>
    <experiments>3</experiments>
</comment>
<comment type="interaction">
    <interactant intactId="EBI-11752486">
        <id>Q86XR8-3</id>
    </interactant>
    <interactant intactId="EBI-11522539">
        <id>Q96MT8-3</id>
        <label>CEP63</label>
    </interactant>
    <organismsDiffer>false</organismsDiffer>
    <experiments>4</experiments>
</comment>
<comment type="interaction">
    <interactant intactId="EBI-11752486">
        <id>Q86XR8-3</id>
    </interactant>
    <interactant intactId="EBI-748597">
        <id>Q05D60</id>
        <label>DEUP1</label>
    </interactant>
    <organismsDiffer>false</organismsDiffer>
    <experiments>3</experiments>
</comment>
<comment type="interaction">
    <interactant intactId="EBI-11752486">
        <id>Q86XR8-3</id>
    </interactant>
    <interactant intactId="EBI-11988027">
        <id>Q9NRI5-2</id>
        <label>DISC1</label>
    </interactant>
    <organismsDiffer>false</organismsDiffer>
    <experiments>3</experiments>
</comment>
<comment type="interaction">
    <interactant intactId="EBI-11752486">
        <id>Q86XR8-3</id>
    </interactant>
    <interactant intactId="EBI-2557269">
        <id>Q9UKT7</id>
        <label>FBXL3</label>
    </interactant>
    <organismsDiffer>false</organismsDiffer>
    <experiments>3</experiments>
</comment>
<comment type="interaction">
    <interactant intactId="EBI-11752486">
        <id>Q86XR8-3</id>
    </interactant>
    <interactant intactId="EBI-746252">
        <id>Q96CN9</id>
        <label>GCC1</label>
    </interactant>
    <organismsDiffer>false</organismsDiffer>
    <experiments>3</experiments>
</comment>
<comment type="interaction">
    <interactant intactId="EBI-11752486">
        <id>Q86XR8-3</id>
    </interactant>
    <interactant intactId="EBI-7116203">
        <id>O75031</id>
        <label>HSF2BP</label>
    </interactant>
    <organismsDiffer>false</organismsDiffer>
    <experiments>6</experiments>
</comment>
<comment type="interaction">
    <interactant intactId="EBI-11752486">
        <id>Q86XR8-3</id>
    </interactant>
    <interactant intactId="EBI-710124">
        <id>O60341</id>
        <label>KDM1A</label>
    </interactant>
    <organismsDiffer>false</organismsDiffer>
    <experiments>3</experiments>
</comment>
<comment type="interaction">
    <interactant intactId="EBI-11752486">
        <id>Q86XR8-3</id>
    </interactant>
    <interactant intactId="EBI-949319">
        <id>Q9NSK0</id>
        <label>KLC4</label>
    </interactant>
    <organismsDiffer>false</organismsDiffer>
    <experiments>3</experiments>
</comment>
<comment type="interaction">
    <interactant intactId="EBI-11752486">
        <id>Q86XR8-3</id>
    </interactant>
    <interactant intactId="EBI-2371606">
        <id>P19013</id>
        <label>KRT4</label>
    </interactant>
    <organismsDiffer>false</organismsDiffer>
    <experiments>3</experiments>
</comment>
<comment type="interaction">
    <interactant intactId="EBI-11752486">
        <id>Q86XR8-3</id>
    </interactant>
    <interactant intactId="EBI-2949715">
        <id>O95678</id>
        <label>KRT75</label>
    </interactant>
    <organismsDiffer>false</organismsDiffer>
    <experiments>3</experiments>
</comment>
<comment type="interaction">
    <interactant intactId="EBI-11752486">
        <id>Q86XR8-3</id>
    </interactant>
    <interactant intactId="EBI-297852">
        <id>P05787</id>
        <label>KRT8</label>
    </interactant>
    <organismsDiffer>false</organismsDiffer>
    <experiments>3</experiments>
</comment>
<comment type="interaction">
    <interactant intactId="EBI-11752486">
        <id>Q86XR8-3</id>
    </interactant>
    <interactant intactId="EBI-10221390">
        <id>P78385</id>
        <label>KRT83</label>
    </interactant>
    <organismsDiffer>false</organismsDiffer>
    <experiments>3</experiments>
</comment>
<comment type="interaction">
    <interactant intactId="EBI-11752486">
        <id>Q86XR8-3</id>
    </interactant>
    <interactant intactId="EBI-9996498">
        <id>O43790</id>
        <label>KRT86</label>
    </interactant>
    <organismsDiffer>false</organismsDiffer>
    <experiments>3</experiments>
</comment>
<comment type="interaction">
    <interactant intactId="EBI-11752486">
        <id>Q86XR8-3</id>
    </interactant>
    <interactant intactId="EBI-11742507">
        <id>Q8TAP4-4</id>
        <label>LMO3</label>
    </interactant>
    <organismsDiffer>false</organismsDiffer>
    <experiments>3</experiments>
</comment>
<comment type="interaction">
    <interactant intactId="EBI-11752486">
        <id>Q86XR8-3</id>
    </interactant>
    <interactant intactId="EBI-5650739">
        <id>P43356</id>
        <label>MAGEA2B</label>
    </interactant>
    <organismsDiffer>false</organismsDiffer>
    <experiments>3</experiments>
</comment>
<comment type="interaction">
    <interactant intactId="EBI-11752486">
        <id>Q86XR8-3</id>
    </interactant>
    <interactant intactId="EBI-536879">
        <id>O43482</id>
        <label>OIP5</label>
    </interactant>
    <organismsDiffer>false</organismsDiffer>
    <experiments>3</experiments>
</comment>
<comment type="interaction">
    <interactant intactId="EBI-11752486">
        <id>Q86XR8-3</id>
    </interactant>
    <interactant intactId="EBI-602382">
        <id>Q16512</id>
        <label>PKN1</label>
    </interactant>
    <organismsDiffer>false</organismsDiffer>
    <experiments>3</experiments>
</comment>
<comment type="interaction">
    <interactant intactId="EBI-11752486">
        <id>Q86XR8-3</id>
    </interactant>
    <interactant intactId="EBI-1105153">
        <id>Q96KQ4</id>
        <label>PPP1R13B</label>
    </interactant>
    <organismsDiffer>false</organismsDiffer>
    <experiments>3</experiments>
</comment>
<comment type="interaction">
    <interactant intactId="EBI-11752486">
        <id>Q86XR8-3</id>
    </interactant>
    <interactant intactId="EBI-447043">
        <id>Q15276</id>
        <label>RABEP1</label>
    </interactant>
    <organismsDiffer>false</organismsDiffer>
    <experiments>3</experiments>
</comment>
<comment type="interaction">
    <interactant intactId="EBI-11752486">
        <id>Q86XR8-3</id>
    </interactant>
    <interactant intactId="EBI-6912267">
        <id>A6NK89</id>
        <label>RASSF10</label>
    </interactant>
    <organismsDiffer>false</organismsDiffer>
    <experiments>3</experiments>
</comment>
<comment type="interaction">
    <interactant intactId="EBI-11752486">
        <id>Q86XR8-3</id>
    </interactant>
    <interactant intactId="EBI-747389">
        <id>Q7L8J4</id>
        <label>SH3BP5L</label>
    </interactant>
    <organismsDiffer>false</organismsDiffer>
    <experiments>3</experiments>
</comment>
<comment type="interaction">
    <interactant intactId="EBI-11752486">
        <id>Q86XR8-3</id>
    </interactant>
    <interactant intactId="EBI-12811275">
        <id>O95238</id>
        <label>SPDEF</label>
    </interactant>
    <organismsDiffer>false</organismsDiffer>
    <experiments>3</experiments>
</comment>
<comment type="interaction">
    <interactant intactId="EBI-11752486">
        <id>Q86XR8-3</id>
    </interactant>
    <interactant intactId="EBI-12090309">
        <id>Q9BXU0</id>
        <label>TEX12</label>
    </interactant>
    <organismsDiffer>false</organismsDiffer>
    <experiments>3</experiments>
</comment>
<comment type="interaction">
    <interactant intactId="EBI-11752486">
        <id>Q86XR8-3</id>
    </interactant>
    <interactant intactId="EBI-1105213">
        <id>Q9UBB9</id>
        <label>TFIP11</label>
    </interactant>
    <organismsDiffer>false</organismsDiffer>
    <experiments>3</experiments>
</comment>
<comment type="interaction">
    <interactant intactId="EBI-11752486">
        <id>Q86XR8-3</id>
    </interactant>
    <interactant intactId="EBI-744794">
        <id>Q9BZW7</id>
        <label>TSGA10</label>
    </interactant>
    <organismsDiffer>false</organismsDiffer>
    <experiments>3</experiments>
</comment>
<comment type="interaction">
    <interactant intactId="EBI-11752486">
        <id>Q86XR8-3</id>
    </interactant>
    <interactant intactId="EBI-308511">
        <id>Q9UJ04</id>
        <label>TSPYL4</label>
    </interactant>
    <organismsDiffer>false</organismsDiffer>
    <experiments>3</experiments>
</comment>
<comment type="interaction">
    <interactant intactId="EBI-11752486">
        <id>Q86XR8-3</id>
    </interactant>
    <interactant intactId="EBI-359793">
        <id>P40222</id>
        <label>TXLNA</label>
    </interactant>
    <organismsDiffer>false</organismsDiffer>
    <experiments>3</experiments>
</comment>
<comment type="interaction">
    <interactant intactId="EBI-11752486">
        <id>Q86XR8-3</id>
    </interactant>
    <interactant intactId="EBI-6116822">
        <id>Q8N3L3</id>
        <label>TXLNB</label>
    </interactant>
    <organismsDiffer>false</organismsDiffer>
    <experiments>3</experiments>
</comment>
<comment type="subcellular location">
    <subcellularLocation>
        <location evidence="1">Nucleus</location>
    </subcellularLocation>
    <subcellularLocation>
        <location>Cytoplasm</location>
    </subcellularLocation>
    <subcellularLocation>
        <location evidence="5">Cytoplasm</location>
        <location evidence="5">Cytoskeleton</location>
        <location evidence="5">Microtubule organizing center</location>
        <location evidence="5">Centrosome</location>
    </subcellularLocation>
</comment>
<comment type="alternative products">
    <event type="alternative splicing"/>
    <isoform>
        <id>Q86XR8-1</id>
        <name>1</name>
        <sequence type="displayed"/>
    </isoform>
    <isoform>
        <id>Q86XR8-2</id>
        <name>2</name>
        <sequence type="described" ref="VSP_012262"/>
    </isoform>
    <isoform>
        <id>Q86XR8-3</id>
        <name>3</name>
        <sequence type="described" ref="VSP_012263 VSP_012264"/>
    </isoform>
    <isoform>
        <id>Q86XR8-4</id>
        <name>4</name>
        <sequence type="described" ref="VSP_037839 VSP_037840"/>
    </isoform>
    <isoform>
        <id>Q86XR8-5</id>
        <name>5</name>
        <sequence type="described" ref="VSP_037839"/>
    </isoform>
</comment>
<comment type="tissue specificity">
    <text evidence="4">Ubiquitous.</text>
</comment>
<comment type="domain">
    <text evidence="1">The C-terminal region mediates the interaction with microtubules and is able to nucleate and bundles microtubules in vitro.</text>
</comment>
<comment type="domain">
    <text evidence="1">The centrosome localization domain (CLD) region mediates the localization to centrosomes and homooligomerization.</text>
</comment>
<comment type="disease" evidence="7">
    <disease id="DI-03206">
        <name>Mosaic variegated aneuploidy syndrome 2</name>
        <acronym>MVA2</acronym>
        <description>A severe developmental disorder characterized by mosaic aneuploidies, predominantly trisomies and monosomies, involving multiple different chromosomes and tissues. Affected individuals typically present with severe intrauterine growth retardation and microcephaly. Eye anomalies, mild dysmorphism, variable developmental delay, and a broad spectrum of additional congenital abnormalities and medical conditions may also occur. The risk of malignancy is high, with rhabdomyosarcoma, Wilms tumor and leukemia reported in several cases.</description>
        <dbReference type="MIM" id="614114"/>
    </disease>
    <text>The disease is caused by variants affecting the gene represented in this entry.</text>
</comment>
<comment type="similarity">
    <text evidence="12">Belongs to the translokin family.</text>
</comment>
<comment type="sequence caution" evidence="12">
    <conflict type="miscellaneous discrepancy">
        <sequence resource="EMBL-CDS" id="AAH29385"/>
    </conflict>
    <text>Contaminating sequence. Potential poly-A sequence.</text>
</comment>
<comment type="sequence caution" evidence="12">
    <conflict type="erroneous initiation">
        <sequence resource="EMBL-CDS" id="BAA07654"/>
    </conflict>
    <text>Extended N-terminus.</text>
</comment>
<comment type="online information" name="Atlas of Genetics and Cytogenetics in Oncology and Haematology">
    <link uri="https://atlasgeneticsoncology.org/gene/43008/CEP57"/>
</comment>
<protein>
    <recommendedName>
        <fullName>Centrosomal protein of 57 kDa</fullName>
        <shortName>Cep57</shortName>
    </recommendedName>
    <alternativeName>
        <fullName>FGF2-interacting protein</fullName>
    </alternativeName>
    <alternativeName>
        <fullName>Testis-specific protein 57</fullName>
    </alternativeName>
    <alternativeName>
        <fullName>Translokin</fullName>
    </alternativeName>
</protein>
<feature type="chain" id="PRO_0000189532" description="Centrosomal protein of 57 kDa">
    <location>
        <begin position="1"/>
        <end position="500"/>
    </location>
</feature>
<feature type="region of interest" description="Disordered" evidence="3">
    <location>
        <begin position="1"/>
        <end position="34"/>
    </location>
</feature>
<feature type="region of interest" description="Disordered" evidence="3">
    <location>
        <begin position="43"/>
        <end position="62"/>
    </location>
</feature>
<feature type="region of interest" description="centrosome localization domain (CLD)" evidence="1">
    <location>
        <begin position="58"/>
        <end position="239"/>
    </location>
</feature>
<feature type="region of interest" description="Mediates interaction with microtubules" evidence="1">
    <location>
        <begin position="277"/>
        <end position="491"/>
    </location>
</feature>
<feature type="region of interest" description="Disordered" evidence="3">
    <location>
        <begin position="434"/>
        <end position="472"/>
    </location>
</feature>
<feature type="coiled-coil region" evidence="2">
    <location>
        <begin position="63"/>
        <end position="242"/>
    </location>
</feature>
<feature type="coiled-coil region" evidence="2">
    <location>
        <begin position="392"/>
        <end position="492"/>
    </location>
</feature>
<feature type="compositionally biased region" description="Low complexity" evidence="3">
    <location>
        <begin position="1"/>
        <end position="17"/>
    </location>
</feature>
<feature type="compositionally biased region" description="Polar residues" evidence="3">
    <location>
        <begin position="18"/>
        <end position="34"/>
    </location>
</feature>
<feature type="compositionally biased region" description="Basic and acidic residues" evidence="3">
    <location>
        <begin position="434"/>
        <end position="450"/>
    </location>
</feature>
<feature type="compositionally biased region" description="Polar residues" evidence="3">
    <location>
        <begin position="451"/>
        <end position="460"/>
    </location>
</feature>
<feature type="compositionally biased region" description="Basic and acidic residues" evidence="3">
    <location>
        <begin position="461"/>
        <end position="471"/>
    </location>
</feature>
<feature type="modified residue" description="Phosphoserine" evidence="13">
    <location>
        <position position="53"/>
    </location>
</feature>
<feature type="modified residue" description="Phosphoserine" evidence="13">
    <location>
        <position position="55"/>
    </location>
</feature>
<feature type="splice variant" id="VSP_037839" description="In isoform 4 and isoform 5." evidence="9">
    <original>MAAASVSAASGSHLS</original>
    <variation>MLTRID</variation>
    <location>
        <begin position="1"/>
        <end position="15"/>
    </location>
</feature>
<feature type="splice variant" id="VSP_012262" description="In isoform 2." evidence="11">
    <location>
        <begin position="270"/>
        <end position="295"/>
    </location>
</feature>
<feature type="splice variant" id="VSP_012263" description="In isoform 3." evidence="10">
    <original>K</original>
    <variation>V</variation>
    <location>
        <position position="270"/>
    </location>
</feature>
<feature type="splice variant" id="VSP_012264" description="In isoform 3." evidence="10">
    <location>
        <begin position="271"/>
        <end position="500"/>
    </location>
</feature>
<feature type="splice variant" id="VSP_037840" description="In isoform 4." evidence="9">
    <location>
        <begin position="498"/>
        <end position="500"/>
    </location>
</feature>
<feature type="sequence variant" id="VAR_059839" description="In dbSNP:rs644799." evidence="4 6">
    <original>R</original>
    <variation>G</variation>
    <location>
        <position position="448"/>
    </location>
</feature>
<feature type="sequence conflict" description="In Ref. 4; BAF83934." evidence="12" ref="4">
    <original>F</original>
    <variation>S</variation>
    <location>
        <position position="45"/>
    </location>
</feature>
<feature type="sequence conflict" description="In Ref. 4; BAG56806." evidence="12" ref="4">
    <original>V</original>
    <variation>A</variation>
    <location>
        <position position="182"/>
    </location>
</feature>
<feature type="sequence conflict" description="In Ref. 4; BAF83934." evidence="12" ref="4">
    <original>K</original>
    <variation>E</variation>
    <location>
        <position position="188"/>
    </location>
</feature>
<feature type="sequence conflict" description="In Ref. 3; BAA07654." evidence="12" ref="3">
    <original>L</original>
    <variation>Q</variation>
    <location>
        <position position="468"/>
    </location>
</feature>
<feature type="helix" evidence="14">
    <location>
        <begin position="357"/>
        <end position="387"/>
    </location>
</feature>
<feature type="helix" evidence="14">
    <location>
        <begin position="391"/>
        <end position="425"/>
    </location>
</feature>
<keyword id="KW-0002">3D-structure</keyword>
<keyword id="KW-0025">Alternative splicing</keyword>
<keyword id="KW-0175">Coiled coil</keyword>
<keyword id="KW-0963">Cytoplasm</keyword>
<keyword id="KW-0206">Cytoskeleton</keyword>
<keyword id="KW-0493">Microtubule</keyword>
<keyword id="KW-0539">Nucleus</keyword>
<keyword id="KW-0597">Phosphoprotein</keyword>
<keyword id="KW-1267">Proteomics identification</keyword>
<keyword id="KW-1185">Reference proteome</keyword>
<reference key="1">
    <citation type="journal article" date="2003" name="Nat. Cell Biol.">
        <title>Translokin is an intracellular mediator of FGF-2 trafficking.</title>
        <authorList>
            <person name="Bossard C."/>
            <person name="Laurell H."/>
            <person name="Van den Berghe L."/>
            <person name="Meunier S."/>
            <person name="Zanibellato C."/>
            <person name="Prats H."/>
        </authorList>
    </citation>
    <scope>NUCLEOTIDE SEQUENCE [MRNA] (ISOFORM 1)</scope>
    <scope>SUBCELLULAR LOCATION</scope>
    <scope>TISSUE SPECIFICITY</scope>
    <scope>SUBUNIT</scope>
    <scope>INTERACTION WITH FGF2</scope>
    <scope>VARIANT GLY-448</scope>
    <source>
        <tissue>Placenta</tissue>
    </source>
</reference>
<reference key="2">
    <citation type="submission" date="2003-02" db="EMBL/GenBank/DDBJ databases">
        <authorList>
            <person name="Kim J.W."/>
        </authorList>
    </citation>
    <scope>NUCLEOTIDE SEQUENCE [MRNA] (ISOFORM 1)</scope>
</reference>
<reference key="3">
    <citation type="journal article" date="1995" name="DNA Res.">
        <title>Prediction of the coding sequences of unidentified human genes. III. The coding sequences of 40 new genes (KIAA0081-KIAA0120) deduced by analysis of cDNA clones from human cell line KG-1.</title>
        <authorList>
            <person name="Nagase T."/>
            <person name="Miyajima N."/>
            <person name="Tanaka A."/>
            <person name="Sazuka T."/>
            <person name="Seki N."/>
            <person name="Sato S."/>
            <person name="Tabata S."/>
            <person name="Ishikawa K."/>
            <person name="Kawarabayasi Y."/>
            <person name="Kotani H."/>
            <person name="Nomura N."/>
        </authorList>
    </citation>
    <scope>NUCLEOTIDE SEQUENCE [LARGE SCALE MRNA] (ISOFORM 2)</scope>
    <source>
        <tissue>Bone marrow</tissue>
    </source>
</reference>
<reference key="4">
    <citation type="journal article" date="2004" name="Nat. Genet.">
        <title>Complete sequencing and characterization of 21,243 full-length human cDNAs.</title>
        <authorList>
            <person name="Ota T."/>
            <person name="Suzuki Y."/>
            <person name="Nishikawa T."/>
            <person name="Otsuki T."/>
            <person name="Sugiyama T."/>
            <person name="Irie R."/>
            <person name="Wakamatsu A."/>
            <person name="Hayashi K."/>
            <person name="Sato H."/>
            <person name="Nagai K."/>
            <person name="Kimura K."/>
            <person name="Makita H."/>
            <person name="Sekine M."/>
            <person name="Obayashi M."/>
            <person name="Nishi T."/>
            <person name="Shibahara T."/>
            <person name="Tanaka T."/>
            <person name="Ishii S."/>
            <person name="Yamamoto J."/>
            <person name="Saito K."/>
            <person name="Kawai Y."/>
            <person name="Isono Y."/>
            <person name="Nakamura Y."/>
            <person name="Nagahari K."/>
            <person name="Murakami K."/>
            <person name="Yasuda T."/>
            <person name="Iwayanagi T."/>
            <person name="Wagatsuma M."/>
            <person name="Shiratori A."/>
            <person name="Sudo H."/>
            <person name="Hosoiri T."/>
            <person name="Kaku Y."/>
            <person name="Kodaira H."/>
            <person name="Kondo H."/>
            <person name="Sugawara M."/>
            <person name="Takahashi M."/>
            <person name="Kanda K."/>
            <person name="Yokoi T."/>
            <person name="Furuya T."/>
            <person name="Kikkawa E."/>
            <person name="Omura Y."/>
            <person name="Abe K."/>
            <person name="Kamihara K."/>
            <person name="Katsuta N."/>
            <person name="Sato K."/>
            <person name="Tanikawa M."/>
            <person name="Yamazaki M."/>
            <person name="Ninomiya K."/>
            <person name="Ishibashi T."/>
            <person name="Yamashita H."/>
            <person name="Murakawa K."/>
            <person name="Fujimori K."/>
            <person name="Tanai H."/>
            <person name="Kimata M."/>
            <person name="Watanabe M."/>
            <person name="Hiraoka S."/>
            <person name="Chiba Y."/>
            <person name="Ishida S."/>
            <person name="Ono Y."/>
            <person name="Takiguchi S."/>
            <person name="Watanabe S."/>
            <person name="Yosida M."/>
            <person name="Hotuta T."/>
            <person name="Kusano J."/>
            <person name="Kanehori K."/>
            <person name="Takahashi-Fujii A."/>
            <person name="Hara H."/>
            <person name="Tanase T.-O."/>
            <person name="Nomura Y."/>
            <person name="Togiya S."/>
            <person name="Komai F."/>
            <person name="Hara R."/>
            <person name="Takeuchi K."/>
            <person name="Arita M."/>
            <person name="Imose N."/>
            <person name="Musashino K."/>
            <person name="Yuuki H."/>
            <person name="Oshima A."/>
            <person name="Sasaki N."/>
            <person name="Aotsuka S."/>
            <person name="Yoshikawa Y."/>
            <person name="Matsunawa H."/>
            <person name="Ichihara T."/>
            <person name="Shiohata N."/>
            <person name="Sano S."/>
            <person name="Moriya S."/>
            <person name="Momiyama H."/>
            <person name="Satoh N."/>
            <person name="Takami S."/>
            <person name="Terashima Y."/>
            <person name="Suzuki O."/>
            <person name="Nakagawa S."/>
            <person name="Senoh A."/>
            <person name="Mizoguchi H."/>
            <person name="Goto Y."/>
            <person name="Shimizu F."/>
            <person name="Wakebe H."/>
            <person name="Hishigaki H."/>
            <person name="Watanabe T."/>
            <person name="Sugiyama A."/>
            <person name="Takemoto M."/>
            <person name="Kawakami B."/>
            <person name="Yamazaki M."/>
            <person name="Watanabe K."/>
            <person name="Kumagai A."/>
            <person name="Itakura S."/>
            <person name="Fukuzumi Y."/>
            <person name="Fujimori Y."/>
            <person name="Komiyama M."/>
            <person name="Tashiro H."/>
            <person name="Tanigami A."/>
            <person name="Fujiwara T."/>
            <person name="Ono T."/>
            <person name="Yamada K."/>
            <person name="Fujii Y."/>
            <person name="Ozaki K."/>
            <person name="Hirao M."/>
            <person name="Ohmori Y."/>
            <person name="Kawabata A."/>
            <person name="Hikiji T."/>
            <person name="Kobatake N."/>
            <person name="Inagaki H."/>
            <person name="Ikema Y."/>
            <person name="Okamoto S."/>
            <person name="Okitani R."/>
            <person name="Kawakami T."/>
            <person name="Noguchi S."/>
            <person name="Itoh T."/>
            <person name="Shigeta K."/>
            <person name="Senba T."/>
            <person name="Matsumura K."/>
            <person name="Nakajima Y."/>
            <person name="Mizuno T."/>
            <person name="Morinaga M."/>
            <person name="Sasaki M."/>
            <person name="Togashi T."/>
            <person name="Oyama M."/>
            <person name="Hata H."/>
            <person name="Watanabe M."/>
            <person name="Komatsu T."/>
            <person name="Mizushima-Sugano J."/>
            <person name="Satoh T."/>
            <person name="Shirai Y."/>
            <person name="Takahashi Y."/>
            <person name="Nakagawa K."/>
            <person name="Okumura K."/>
            <person name="Nagase T."/>
            <person name="Nomura N."/>
            <person name="Kikuchi H."/>
            <person name="Masuho Y."/>
            <person name="Yamashita R."/>
            <person name="Nakai K."/>
            <person name="Yada T."/>
            <person name="Nakamura Y."/>
            <person name="Ohara O."/>
            <person name="Isogai T."/>
            <person name="Sugano S."/>
        </authorList>
    </citation>
    <scope>NUCLEOTIDE SEQUENCE [LARGE SCALE MRNA] (ISOFORMS 1 AND 4)</scope>
    <scope>VARIANT GLY-448</scope>
    <source>
        <tissue>Teratocarcinoma</tissue>
    </source>
</reference>
<reference key="5">
    <citation type="journal article" date="2006" name="Nature">
        <title>Human chromosome 11 DNA sequence and analysis including novel gene identification.</title>
        <authorList>
            <person name="Taylor T.D."/>
            <person name="Noguchi H."/>
            <person name="Totoki Y."/>
            <person name="Toyoda A."/>
            <person name="Kuroki Y."/>
            <person name="Dewar K."/>
            <person name="Lloyd C."/>
            <person name="Itoh T."/>
            <person name="Takeda T."/>
            <person name="Kim D.-W."/>
            <person name="She X."/>
            <person name="Barlow K.F."/>
            <person name="Bloom T."/>
            <person name="Bruford E."/>
            <person name="Chang J.L."/>
            <person name="Cuomo C.A."/>
            <person name="Eichler E."/>
            <person name="FitzGerald M.G."/>
            <person name="Jaffe D.B."/>
            <person name="LaButti K."/>
            <person name="Nicol R."/>
            <person name="Park H.-S."/>
            <person name="Seaman C."/>
            <person name="Sougnez C."/>
            <person name="Yang X."/>
            <person name="Zimmer A.R."/>
            <person name="Zody M.C."/>
            <person name="Birren B.W."/>
            <person name="Nusbaum C."/>
            <person name="Fujiyama A."/>
            <person name="Hattori M."/>
            <person name="Rogers J."/>
            <person name="Lander E.S."/>
            <person name="Sakaki Y."/>
        </authorList>
    </citation>
    <scope>NUCLEOTIDE SEQUENCE [LARGE SCALE GENOMIC DNA]</scope>
</reference>
<reference key="6">
    <citation type="journal article" date="2004" name="Genome Res.">
        <title>The status, quality, and expansion of the NIH full-length cDNA project: the Mammalian Gene Collection (MGC).</title>
        <authorList>
            <consortium name="The MGC Project Team"/>
        </authorList>
    </citation>
    <scope>NUCLEOTIDE SEQUENCE [LARGE SCALE MRNA] (ISOFORMS 1 AND 3)</scope>
    <source>
        <tissue>Kidney</tissue>
        <tissue>Mammary gland</tissue>
        <tissue>Placenta</tissue>
    </source>
</reference>
<reference key="7">
    <citation type="journal article" date="2003" name="Nature">
        <title>Proteomic characterization of the human centrosome by protein correlation profiling.</title>
        <authorList>
            <person name="Andersen J.S."/>
            <person name="Wilkinson C.J."/>
            <person name="Mayor T."/>
            <person name="Mortensen P."/>
            <person name="Nigg E.A."/>
            <person name="Mann M."/>
        </authorList>
    </citation>
    <scope>IDENTIFICATION BY MASS SPECTROMETRY</scope>
    <scope>SUBCELLULAR LOCATION [LARGE SCALE ANALYSIS]</scope>
    <source>
        <tissue>Lymphoblast</tissue>
    </source>
</reference>
<reference key="8">
    <citation type="journal article" date="2011" name="Nat. Genet.">
        <title>Mutations in CEP57 cause mosaic variegated aneuploidy syndrome.</title>
        <authorList>
            <person name="Snape K."/>
            <person name="Hanks S."/>
            <person name="Ruark E."/>
            <person name="Barros-Nunez P."/>
            <person name="Elliott A."/>
            <person name="Murray A."/>
            <person name="Lane A.H."/>
            <person name="Shannon N."/>
            <person name="Callier P."/>
            <person name="Chitayat D."/>
            <person name="Clayton-Smith J."/>
            <person name="Fitzpatrick D.R."/>
            <person name="Gisselsson D."/>
            <person name="Jacquemont S."/>
            <person name="Asakura-Hay K."/>
            <person name="Micale M.A."/>
            <person name="Tolmie J."/>
            <person name="Turnpenny P.D."/>
            <person name="Wright M."/>
            <person name="Douglas J."/>
            <person name="Rahman N."/>
        </authorList>
    </citation>
    <scope>INVOLVEMENT IN MVA2</scope>
</reference>
<reference key="9">
    <citation type="journal article" date="2011" name="Sci. Signal.">
        <title>System-wide temporal characterization of the proteome and phosphoproteome of human embryonic stem cell differentiation.</title>
        <authorList>
            <person name="Rigbolt K.T."/>
            <person name="Prokhorova T.A."/>
            <person name="Akimov V."/>
            <person name="Henningsen J."/>
            <person name="Johansen P.T."/>
            <person name="Kratchmarova I."/>
            <person name="Kassem M."/>
            <person name="Mann M."/>
            <person name="Olsen J.V."/>
            <person name="Blagoev B."/>
        </authorList>
    </citation>
    <scope>IDENTIFICATION BY MASS SPECTROMETRY [LARGE SCALE ANALYSIS]</scope>
</reference>
<reference key="10">
    <citation type="journal article" date="2012" name="Traffic">
        <title>Nuclear import of exogenous FGF1 requires the ER-protein LRRC59 and the importins Kpnalpha1 and Kpnbeta1.</title>
        <authorList>
            <person name="Zhen Y."/>
            <person name="Sorensen V."/>
            <person name="Skjerpen C.S."/>
            <person name="Haugsten E.M."/>
            <person name="Jin Y."/>
            <person name="Walchli S."/>
            <person name="Olsnes S."/>
            <person name="Wiedlocha A."/>
        </authorList>
    </citation>
    <scope>FUNCTION</scope>
</reference>
<reference key="11">
    <citation type="journal article" date="2013" name="J. Proteome Res.">
        <title>Toward a comprehensive characterization of a human cancer cell phosphoproteome.</title>
        <authorList>
            <person name="Zhou H."/>
            <person name="Di Palma S."/>
            <person name="Preisinger C."/>
            <person name="Peng M."/>
            <person name="Polat A.N."/>
            <person name="Heck A.J."/>
            <person name="Mohammed S."/>
        </authorList>
    </citation>
    <scope>PHOSPHORYLATION [LARGE SCALE ANALYSIS] AT SER-53 AND SER-55</scope>
    <scope>IDENTIFICATION BY MASS SPECTROMETRY [LARGE SCALE ANALYSIS]</scope>
    <source>
        <tissue>Cervix carcinoma</tissue>
        <tissue>Erythroleukemia</tissue>
    </source>
</reference>
<evidence type="ECO:0000250" key="1"/>
<evidence type="ECO:0000255" key="2"/>
<evidence type="ECO:0000256" key="3">
    <source>
        <dbReference type="SAM" id="MobiDB-lite"/>
    </source>
</evidence>
<evidence type="ECO:0000269" key="4">
    <source>
    </source>
</evidence>
<evidence type="ECO:0000269" key="5">
    <source>
    </source>
</evidence>
<evidence type="ECO:0000269" key="6">
    <source>
    </source>
</evidence>
<evidence type="ECO:0000269" key="7">
    <source>
    </source>
</evidence>
<evidence type="ECO:0000269" key="8">
    <source>
    </source>
</evidence>
<evidence type="ECO:0000303" key="9">
    <source>
    </source>
</evidence>
<evidence type="ECO:0000303" key="10">
    <source>
    </source>
</evidence>
<evidence type="ECO:0000303" key="11">
    <source>
    </source>
</evidence>
<evidence type="ECO:0000305" key="12"/>
<evidence type="ECO:0007744" key="13">
    <source>
    </source>
</evidence>
<evidence type="ECO:0007829" key="14">
    <source>
        <dbReference type="PDB" id="8IBH"/>
    </source>
</evidence>
<organism>
    <name type="scientific">Homo sapiens</name>
    <name type="common">Human</name>
    <dbReference type="NCBI Taxonomy" id="9606"/>
    <lineage>
        <taxon>Eukaryota</taxon>
        <taxon>Metazoa</taxon>
        <taxon>Chordata</taxon>
        <taxon>Craniata</taxon>
        <taxon>Vertebrata</taxon>
        <taxon>Euteleostomi</taxon>
        <taxon>Mammalia</taxon>
        <taxon>Eutheria</taxon>
        <taxon>Euarchontoglires</taxon>
        <taxon>Primates</taxon>
        <taxon>Haplorrhini</taxon>
        <taxon>Catarrhini</taxon>
        <taxon>Hominidae</taxon>
        <taxon>Homo</taxon>
    </lineage>
</organism>
<accession>Q86XR8</accession>
<accession>A0PJH1</accession>
<accession>A8K5D0</accession>
<accession>B4DDP5</accession>
<accession>F5H5F7</accession>
<accession>Q14704</accession>
<accession>Q5JB46</accession>
<accession>Q8IXP0</accession>
<accession>Q9BVF9</accession>
<sequence>MAAASVSAASGSHLSNSFAEPSRSNGSMVRHSSSPYVVYPSDKPFLNSDLRRSPSKPTLAYPESNSRAIFSALKNLQDKIRRLELERIQAEESVKTLSRETIEYKKVLDEQIQERENSKNEESKHNQELTSQLLAAENKCNLLEKQLEYMRNMIKHAEMERTSVLEKQVSLERERQHDQTHVQSQLEKLDLLEQEYNKLTTMQALAEKKMQELEAKLHEEEQERKRMQAKAAELQTGLETNRLIFEDKATPCVPNARRIKKKKSKPPEKKSSRNYFGAQPHYRLCLGDMPFVAGKSTSPSHAVVANVQLVLHLMKQHSKALCNDRVINSIPLAKQVSSRGGKSKKLSVTPPSSNGINEELSEVLQTLQDEFGQMSFDHQQLAKLIQESPTVELKDKLECELEALVGRMEAKANQITKVRKYQAQLEKQKLEKQKKELKATKKTLDEERNSSSRSGITGTTNKKDFMKLRPGEKRRKNLQLLKDMQSIQNSLQSSSLCWDY</sequence>
<proteinExistence type="evidence at protein level"/>
<gene>
    <name type="primary">CEP57</name>
    <name type="synonym">KIAA0092</name>
    <name type="synonym">TSP57</name>
</gene>
<dbReference type="EMBL" id="AY225092">
    <property type="protein sequence ID" value="AAO73938.1"/>
    <property type="molecule type" value="mRNA"/>
</dbReference>
<dbReference type="EMBL" id="AY239292">
    <property type="protein sequence ID" value="AAP72184.1"/>
    <property type="molecule type" value="mRNA"/>
</dbReference>
<dbReference type="EMBL" id="D42054">
    <property type="protein sequence ID" value="BAA07654.2"/>
    <property type="status" value="ALT_INIT"/>
    <property type="molecule type" value="mRNA"/>
</dbReference>
<dbReference type="EMBL" id="AK291245">
    <property type="protein sequence ID" value="BAF83934.1"/>
    <property type="molecule type" value="mRNA"/>
</dbReference>
<dbReference type="EMBL" id="AK293277">
    <property type="protein sequence ID" value="BAG56806.1"/>
    <property type="molecule type" value="mRNA"/>
</dbReference>
<dbReference type="EMBL" id="AP001877">
    <property type="status" value="NOT_ANNOTATED_CDS"/>
    <property type="molecule type" value="Genomic_DNA"/>
</dbReference>
<dbReference type="EMBL" id="BC001233">
    <property type="protein sequence ID" value="AAH01233.1"/>
    <property type="molecule type" value="mRNA"/>
</dbReference>
<dbReference type="EMBL" id="BC029385">
    <property type="protein sequence ID" value="AAH29385.1"/>
    <property type="status" value="ALT_SEQ"/>
    <property type="molecule type" value="mRNA"/>
</dbReference>
<dbReference type="EMBL" id="BC039711">
    <property type="protein sequence ID" value="AAH39711.1"/>
    <property type="molecule type" value="mRNA"/>
</dbReference>
<dbReference type="CCDS" id="CCDS58166.1">
    <molecule id="Q86XR8-2"/>
</dbReference>
<dbReference type="CCDS" id="CCDS58167.1">
    <molecule id="Q86XR8-5"/>
</dbReference>
<dbReference type="CCDS" id="CCDS8304.1">
    <molecule id="Q86XR8-1"/>
</dbReference>
<dbReference type="RefSeq" id="NP_001230705.1">
    <molecule id="Q86XR8-5"/>
    <property type="nucleotide sequence ID" value="NM_001243776.2"/>
</dbReference>
<dbReference type="RefSeq" id="NP_001230706.1">
    <molecule id="Q86XR8-2"/>
    <property type="nucleotide sequence ID" value="NM_001243777.2"/>
</dbReference>
<dbReference type="RefSeq" id="NP_055494.2">
    <molecule id="Q86XR8-1"/>
    <property type="nucleotide sequence ID" value="NM_014679.4"/>
</dbReference>
<dbReference type="RefSeq" id="XP_016874081.1">
    <molecule id="Q86XR8-5"/>
    <property type="nucleotide sequence ID" value="XM_017018592.2"/>
</dbReference>
<dbReference type="PDB" id="4L0R">
    <property type="method" value="X-ray"/>
    <property type="resolution" value="2.49 A"/>
    <property type="chains" value="A/B=334-433"/>
</dbReference>
<dbReference type="PDB" id="8IBH">
    <property type="method" value="X-ray"/>
    <property type="resolution" value="2.10 A"/>
    <property type="chains" value="A=334-433"/>
</dbReference>
<dbReference type="PDBsum" id="4L0R"/>
<dbReference type="PDBsum" id="8IBH"/>
<dbReference type="SMR" id="Q86XR8"/>
<dbReference type="BioGRID" id="115054">
    <property type="interactions" value="162"/>
</dbReference>
<dbReference type="FunCoup" id="Q86XR8">
    <property type="interactions" value="3471"/>
</dbReference>
<dbReference type="IntAct" id="Q86XR8">
    <property type="interactions" value="68"/>
</dbReference>
<dbReference type="MINT" id="Q86XR8"/>
<dbReference type="STRING" id="9606.ENSP00000317902"/>
<dbReference type="GlyCosmos" id="Q86XR8">
    <property type="glycosylation" value="1 site, 2 glycans"/>
</dbReference>
<dbReference type="GlyGen" id="Q86XR8">
    <property type="glycosylation" value="2 sites, 2 O-linked glycans (2 sites)"/>
</dbReference>
<dbReference type="iPTMnet" id="Q86XR8"/>
<dbReference type="PhosphoSitePlus" id="Q86XR8"/>
<dbReference type="BioMuta" id="CEP57"/>
<dbReference type="DMDM" id="56748768"/>
<dbReference type="jPOST" id="Q86XR8"/>
<dbReference type="MassIVE" id="Q86XR8"/>
<dbReference type="PaxDb" id="9606-ENSP00000317902"/>
<dbReference type="PeptideAtlas" id="Q86XR8"/>
<dbReference type="ProteomicsDB" id="26863"/>
<dbReference type="ProteomicsDB" id="70324">
    <molecule id="Q86XR8-1"/>
</dbReference>
<dbReference type="ProteomicsDB" id="70325">
    <molecule id="Q86XR8-2"/>
</dbReference>
<dbReference type="ProteomicsDB" id="70326">
    <molecule id="Q86XR8-3"/>
</dbReference>
<dbReference type="ProteomicsDB" id="70327">
    <molecule id="Q86XR8-4"/>
</dbReference>
<dbReference type="Pumba" id="Q86XR8"/>
<dbReference type="Antibodypedia" id="17918">
    <property type="antibodies" value="234 antibodies from 27 providers"/>
</dbReference>
<dbReference type="DNASU" id="9702"/>
<dbReference type="Ensembl" id="ENST00000325486.9">
    <molecule id="Q86XR8-2"/>
    <property type="protein sequence ID" value="ENSP00000317487.5"/>
    <property type="gene ID" value="ENSG00000166037.11"/>
</dbReference>
<dbReference type="Ensembl" id="ENST00000325542.10">
    <molecule id="Q86XR8-1"/>
    <property type="protein sequence ID" value="ENSP00000317902.5"/>
    <property type="gene ID" value="ENSG00000166037.11"/>
</dbReference>
<dbReference type="Ensembl" id="ENST00000538658.5">
    <molecule id="Q86XR8-3"/>
    <property type="protein sequence ID" value="ENSP00000445706.1"/>
    <property type="gene ID" value="ENSG00000166037.11"/>
</dbReference>
<dbReference type="Ensembl" id="ENST00000541150.5">
    <molecule id="Q86XR8-5"/>
    <property type="protein sequence ID" value="ENSP00000443436.1"/>
    <property type="gene ID" value="ENSG00000166037.11"/>
</dbReference>
<dbReference type="GeneID" id="9702"/>
<dbReference type="KEGG" id="hsa:9702"/>
<dbReference type="MANE-Select" id="ENST00000325542.10">
    <property type="protein sequence ID" value="ENSP00000317902.5"/>
    <property type="RefSeq nucleotide sequence ID" value="NM_014679.5"/>
    <property type="RefSeq protein sequence ID" value="NP_055494.2"/>
</dbReference>
<dbReference type="UCSC" id="uc001pfo.3">
    <molecule id="Q86XR8-1"/>
    <property type="organism name" value="human"/>
</dbReference>
<dbReference type="AGR" id="HGNC:30794"/>
<dbReference type="CTD" id="9702"/>
<dbReference type="DisGeNET" id="9702"/>
<dbReference type="GeneCards" id="CEP57"/>
<dbReference type="HGNC" id="HGNC:30794">
    <property type="gene designation" value="CEP57"/>
</dbReference>
<dbReference type="HPA" id="ENSG00000166037">
    <property type="expression patterns" value="Low tissue specificity"/>
</dbReference>
<dbReference type="MalaCards" id="CEP57"/>
<dbReference type="MIM" id="607951">
    <property type="type" value="gene"/>
</dbReference>
<dbReference type="MIM" id="614114">
    <property type="type" value="phenotype"/>
</dbReference>
<dbReference type="neXtProt" id="NX_Q86XR8"/>
<dbReference type="OpenTargets" id="ENSG00000166037"/>
<dbReference type="Orphanet" id="1052">
    <property type="disease" value="Mosaic variegated aneuploidy syndrome"/>
</dbReference>
<dbReference type="PharmGKB" id="PA142672123"/>
<dbReference type="VEuPathDB" id="HostDB:ENSG00000166037"/>
<dbReference type="eggNOG" id="ENOG502QTZR">
    <property type="taxonomic scope" value="Eukaryota"/>
</dbReference>
<dbReference type="GeneTree" id="ENSGT00530000063695"/>
<dbReference type="HOGENOM" id="CLU_939967_0_0_1"/>
<dbReference type="InParanoid" id="Q86XR8"/>
<dbReference type="OMA" id="YMKQMIA"/>
<dbReference type="OrthoDB" id="76453at2759"/>
<dbReference type="PAN-GO" id="Q86XR8">
    <property type="GO annotations" value="2 GO annotations based on evolutionary models"/>
</dbReference>
<dbReference type="PhylomeDB" id="Q86XR8"/>
<dbReference type="TreeFam" id="TF329178"/>
<dbReference type="PathwayCommons" id="Q86XR8"/>
<dbReference type="Reactome" id="R-HSA-2565942">
    <property type="pathway name" value="Regulation of PLK1 Activity at G2/M Transition"/>
</dbReference>
<dbReference type="Reactome" id="R-HSA-380259">
    <property type="pathway name" value="Loss of Nlp from mitotic centrosomes"/>
</dbReference>
<dbReference type="Reactome" id="R-HSA-380270">
    <property type="pathway name" value="Recruitment of mitotic centrosome proteins and complexes"/>
</dbReference>
<dbReference type="Reactome" id="R-HSA-380284">
    <property type="pathway name" value="Loss of proteins required for interphase microtubule organization from the centrosome"/>
</dbReference>
<dbReference type="Reactome" id="R-HSA-380320">
    <property type="pathway name" value="Recruitment of NuMA to mitotic centrosomes"/>
</dbReference>
<dbReference type="Reactome" id="R-HSA-5620912">
    <property type="pathway name" value="Anchoring of the basal body to the plasma membrane"/>
</dbReference>
<dbReference type="Reactome" id="R-HSA-8854518">
    <property type="pathway name" value="AURKA Activation by TPX2"/>
</dbReference>
<dbReference type="SignaLink" id="Q86XR8"/>
<dbReference type="BioGRID-ORCS" id="9702">
    <property type="hits" value="94 hits in 1166 CRISPR screens"/>
</dbReference>
<dbReference type="CD-CODE" id="8C2F96ED">
    <property type="entry name" value="Centrosome"/>
</dbReference>
<dbReference type="ChiTaRS" id="CEP57">
    <property type="organism name" value="human"/>
</dbReference>
<dbReference type="EvolutionaryTrace" id="Q86XR8"/>
<dbReference type="GeneWiki" id="CEP57"/>
<dbReference type="GenomeRNAi" id="9702"/>
<dbReference type="Pharos" id="Q86XR8">
    <property type="development level" value="Tbio"/>
</dbReference>
<dbReference type="PRO" id="PR:Q86XR8"/>
<dbReference type="Proteomes" id="UP000005640">
    <property type="component" value="Chromosome 11"/>
</dbReference>
<dbReference type="RNAct" id="Q86XR8">
    <property type="molecule type" value="protein"/>
</dbReference>
<dbReference type="Bgee" id="ENSG00000166037">
    <property type="expression patterns" value="Expressed in oocyte and 205 other cell types or tissues"/>
</dbReference>
<dbReference type="ExpressionAtlas" id="Q86XR8">
    <property type="expression patterns" value="baseline and differential"/>
</dbReference>
<dbReference type="GO" id="GO:0034451">
    <property type="term" value="C:centriolar satellite"/>
    <property type="evidence" value="ECO:0000314"/>
    <property type="project" value="HPA"/>
</dbReference>
<dbReference type="GO" id="GO:0005813">
    <property type="term" value="C:centrosome"/>
    <property type="evidence" value="ECO:0000314"/>
    <property type="project" value="HPA"/>
</dbReference>
<dbReference type="GO" id="GO:0005829">
    <property type="term" value="C:cytosol"/>
    <property type="evidence" value="ECO:0000314"/>
    <property type="project" value="HPA"/>
</dbReference>
<dbReference type="GO" id="GO:0005794">
    <property type="term" value="C:Golgi apparatus"/>
    <property type="evidence" value="ECO:0000314"/>
    <property type="project" value="UniProtKB"/>
</dbReference>
<dbReference type="GO" id="GO:0005874">
    <property type="term" value="C:microtubule"/>
    <property type="evidence" value="ECO:0000314"/>
    <property type="project" value="UniProtKB"/>
</dbReference>
<dbReference type="GO" id="GO:0005634">
    <property type="term" value="C:nucleus"/>
    <property type="evidence" value="ECO:0000250"/>
    <property type="project" value="HGNC-UCL"/>
</dbReference>
<dbReference type="GO" id="GO:0017134">
    <property type="term" value="F:fibroblast growth factor binding"/>
    <property type="evidence" value="ECO:0000353"/>
    <property type="project" value="UniProtKB"/>
</dbReference>
<dbReference type="GO" id="GO:0043015">
    <property type="term" value="F:gamma-tubulin binding"/>
    <property type="evidence" value="ECO:0007669"/>
    <property type="project" value="InterPro"/>
</dbReference>
<dbReference type="GO" id="GO:0008017">
    <property type="term" value="F:microtubule binding"/>
    <property type="evidence" value="ECO:0000318"/>
    <property type="project" value="GO_Central"/>
</dbReference>
<dbReference type="GO" id="GO:0042803">
    <property type="term" value="F:protein homodimerization activity"/>
    <property type="evidence" value="ECO:0000353"/>
    <property type="project" value="UniProtKB"/>
</dbReference>
<dbReference type="GO" id="GO:0008543">
    <property type="term" value="P:fibroblast growth factor receptor signaling pathway"/>
    <property type="evidence" value="ECO:0000353"/>
    <property type="project" value="UniProtKB"/>
</dbReference>
<dbReference type="GO" id="GO:0051260">
    <property type="term" value="P:protein homooligomerization"/>
    <property type="evidence" value="ECO:0007669"/>
    <property type="project" value="Ensembl"/>
</dbReference>
<dbReference type="GO" id="GO:0007286">
    <property type="term" value="P:spermatid development"/>
    <property type="evidence" value="ECO:0000250"/>
    <property type="project" value="HGNC-UCL"/>
</dbReference>
<dbReference type="FunFam" id="1.20.58.90:FF:000003">
    <property type="entry name" value="Centrosomal protein of 57 kDa"/>
    <property type="match status" value="1"/>
</dbReference>
<dbReference type="Gene3D" id="1.20.58.90">
    <property type="match status" value="1"/>
</dbReference>
<dbReference type="InterPro" id="IPR051756">
    <property type="entry name" value="Centrosomal_MT-associated"/>
</dbReference>
<dbReference type="InterPro" id="IPR025913">
    <property type="entry name" value="Cep57_CLD"/>
</dbReference>
<dbReference type="InterPro" id="IPR024957">
    <property type="entry name" value="Cep57_MT-bd_dom"/>
</dbReference>
<dbReference type="PANTHER" id="PTHR19336:SF11">
    <property type="entry name" value="CENTROSOMAL PROTEIN OF 57 KDA"/>
    <property type="match status" value="1"/>
</dbReference>
<dbReference type="PANTHER" id="PTHR19336">
    <property type="entry name" value="UNCHARACTERIZED DUF1167"/>
    <property type="match status" value="1"/>
</dbReference>
<dbReference type="Pfam" id="PF14073">
    <property type="entry name" value="Cep57_CLD"/>
    <property type="match status" value="1"/>
</dbReference>
<dbReference type="Pfam" id="PF06657">
    <property type="entry name" value="Cep57_MT_bd"/>
    <property type="match status" value="1"/>
</dbReference>